<accession>B7VSR4</accession>
<dbReference type="EMBL" id="FM954973">
    <property type="protein sequence ID" value="CAV26696.1"/>
    <property type="molecule type" value="Genomic_DNA"/>
</dbReference>
<dbReference type="STRING" id="575788.VS_II0881"/>
<dbReference type="KEGG" id="vsp:VS_II0881"/>
<dbReference type="PATRIC" id="fig|575788.5.peg.835"/>
<dbReference type="eggNOG" id="COG3110">
    <property type="taxonomic scope" value="Bacteria"/>
</dbReference>
<dbReference type="HOGENOM" id="CLU_073782_1_0_6"/>
<dbReference type="Proteomes" id="UP000009100">
    <property type="component" value="Chromosome 2"/>
</dbReference>
<dbReference type="HAMAP" id="MF_00789">
    <property type="entry name" value="UPF0319"/>
    <property type="match status" value="1"/>
</dbReference>
<dbReference type="InterPro" id="IPR018635">
    <property type="entry name" value="UPF0319"/>
</dbReference>
<dbReference type="NCBIfam" id="NF003383">
    <property type="entry name" value="PRK04517.1"/>
    <property type="match status" value="1"/>
</dbReference>
<dbReference type="PANTHER" id="PTHR38108">
    <property type="entry name" value="UPF0319 PROTEIN YCCT"/>
    <property type="match status" value="1"/>
</dbReference>
<dbReference type="PANTHER" id="PTHR38108:SF1">
    <property type="entry name" value="UPF0319 PROTEIN YCCT"/>
    <property type="match status" value="1"/>
</dbReference>
<dbReference type="Pfam" id="PF09829">
    <property type="entry name" value="DUF2057"/>
    <property type="match status" value="1"/>
</dbReference>
<sequence length="217" mass="23686">MKTIQSIALLSAIVAAPSVLADVEIQVPSSVDILAVNEAKPDLDGGLFSSHKTLTLPDGQNQIVFQYQLAFDKGNDREFVDSDAVIATFDATDTTLTFDLPKYRNTAEAKSGFKNLEWSLVDENQNEISVKQDKLVKDGMQIGRKYPQEAKEYNQQGGIAALAIGTTAGATAAVVQPVTLPAKIDGNAANTAEEMLYFWYEKADAETKQKFKDYVNK</sequence>
<organism>
    <name type="scientific">Vibrio atlanticus (strain LGP32)</name>
    <name type="common">Vibrio splendidus (strain Mel32)</name>
    <dbReference type="NCBI Taxonomy" id="575788"/>
    <lineage>
        <taxon>Bacteria</taxon>
        <taxon>Pseudomonadati</taxon>
        <taxon>Pseudomonadota</taxon>
        <taxon>Gammaproteobacteria</taxon>
        <taxon>Vibrionales</taxon>
        <taxon>Vibrionaceae</taxon>
        <taxon>Vibrio</taxon>
    </lineage>
</organism>
<gene>
    <name type="ordered locus">VS_II0881</name>
</gene>
<feature type="signal peptide" evidence="1">
    <location>
        <begin position="1"/>
        <end position="21"/>
    </location>
</feature>
<feature type="chain" id="PRO_1000148491" description="UPF0319 protein VS_II0881">
    <location>
        <begin position="22"/>
        <end position="217"/>
    </location>
</feature>
<keyword id="KW-0732">Signal</keyword>
<proteinExistence type="inferred from homology"/>
<reference key="1">
    <citation type="submission" date="2009-02" db="EMBL/GenBank/DDBJ databases">
        <title>Vibrio splendidus str. LGP32 complete genome.</title>
        <authorList>
            <person name="Mazel D."/>
            <person name="Le Roux F."/>
        </authorList>
    </citation>
    <scope>NUCLEOTIDE SEQUENCE [LARGE SCALE GENOMIC DNA]</scope>
    <source>
        <strain>LGP32</strain>
    </source>
</reference>
<comment type="similarity">
    <text evidence="1">Belongs to the UPF0319 family.</text>
</comment>
<evidence type="ECO:0000255" key="1">
    <source>
        <dbReference type="HAMAP-Rule" id="MF_00789"/>
    </source>
</evidence>
<protein>
    <recommendedName>
        <fullName evidence="1">UPF0319 protein VS_II0881</fullName>
    </recommendedName>
</protein>
<name>Y4081_VIBA3</name>